<proteinExistence type="inferred from homology"/>
<organism>
    <name type="scientific">Chlorobium limicola (strain DSM 245 / NBRC 103803 / 6330)</name>
    <dbReference type="NCBI Taxonomy" id="290315"/>
    <lineage>
        <taxon>Bacteria</taxon>
        <taxon>Pseudomonadati</taxon>
        <taxon>Chlorobiota</taxon>
        <taxon>Chlorobiia</taxon>
        <taxon>Chlorobiales</taxon>
        <taxon>Chlorobiaceae</taxon>
        <taxon>Chlorobium/Pelodictyon group</taxon>
        <taxon>Chlorobium</taxon>
    </lineage>
</organism>
<reference key="1">
    <citation type="submission" date="2008-05" db="EMBL/GenBank/DDBJ databases">
        <title>Complete sequence of Chlorobium limicola DSM 245.</title>
        <authorList>
            <consortium name="US DOE Joint Genome Institute"/>
            <person name="Lucas S."/>
            <person name="Copeland A."/>
            <person name="Lapidus A."/>
            <person name="Glavina del Rio T."/>
            <person name="Dalin E."/>
            <person name="Tice H."/>
            <person name="Bruce D."/>
            <person name="Goodwin L."/>
            <person name="Pitluck S."/>
            <person name="Schmutz J."/>
            <person name="Larimer F."/>
            <person name="Land M."/>
            <person name="Hauser L."/>
            <person name="Kyrpides N."/>
            <person name="Ovchinnikova G."/>
            <person name="Zhao F."/>
            <person name="Li T."/>
            <person name="Liu Z."/>
            <person name="Overmann J."/>
            <person name="Bryant D.A."/>
            <person name="Richardson P."/>
        </authorList>
    </citation>
    <scope>NUCLEOTIDE SEQUENCE [LARGE SCALE GENOMIC DNA]</scope>
    <source>
        <strain>DSM 245 / NBRC 103803 / 6330</strain>
    </source>
</reference>
<name>RL20_CHLL2</name>
<keyword id="KW-0687">Ribonucleoprotein</keyword>
<keyword id="KW-0689">Ribosomal protein</keyword>
<keyword id="KW-0694">RNA-binding</keyword>
<keyword id="KW-0699">rRNA-binding</keyword>
<feature type="chain" id="PRO_1000122289" description="Large ribosomal subunit protein bL20">
    <location>
        <begin position="1"/>
        <end position="115"/>
    </location>
</feature>
<comment type="function">
    <text evidence="1">Binds directly to 23S ribosomal RNA and is necessary for the in vitro assembly process of the 50S ribosomal subunit. It is not involved in the protein synthesizing functions of that subunit.</text>
</comment>
<comment type="similarity">
    <text evidence="1">Belongs to the bacterial ribosomal protein bL20 family.</text>
</comment>
<sequence length="115" mass="13059">MPKANNAVASRARRKRILKKAKGFWGSRGNILTVVKHAVDKAEQYAYRDRRAKKRTFRSLWIMRINAAARLNGTTYSRLVDAMSKKSVEIDRKVLAEIAVKDPAAFTQIVKSVID</sequence>
<accession>B3EEB8</accession>
<protein>
    <recommendedName>
        <fullName evidence="1">Large ribosomal subunit protein bL20</fullName>
    </recommendedName>
    <alternativeName>
        <fullName evidence="2">50S ribosomal protein L20</fullName>
    </alternativeName>
</protein>
<gene>
    <name evidence="1" type="primary">rplT</name>
    <name type="ordered locus">Clim_0153</name>
</gene>
<dbReference type="EMBL" id="CP001097">
    <property type="protein sequence ID" value="ACD89252.1"/>
    <property type="molecule type" value="Genomic_DNA"/>
</dbReference>
<dbReference type="RefSeq" id="WP_012465133.1">
    <property type="nucleotide sequence ID" value="NC_010803.1"/>
</dbReference>
<dbReference type="SMR" id="B3EEB8"/>
<dbReference type="STRING" id="290315.Clim_0153"/>
<dbReference type="KEGG" id="cli:Clim_0153"/>
<dbReference type="eggNOG" id="COG0292">
    <property type="taxonomic scope" value="Bacteria"/>
</dbReference>
<dbReference type="HOGENOM" id="CLU_123265_0_1_10"/>
<dbReference type="OrthoDB" id="9808966at2"/>
<dbReference type="Proteomes" id="UP000008841">
    <property type="component" value="Chromosome"/>
</dbReference>
<dbReference type="GO" id="GO:1990904">
    <property type="term" value="C:ribonucleoprotein complex"/>
    <property type="evidence" value="ECO:0007669"/>
    <property type="project" value="UniProtKB-KW"/>
</dbReference>
<dbReference type="GO" id="GO:0005840">
    <property type="term" value="C:ribosome"/>
    <property type="evidence" value="ECO:0007669"/>
    <property type="project" value="UniProtKB-KW"/>
</dbReference>
<dbReference type="GO" id="GO:0019843">
    <property type="term" value="F:rRNA binding"/>
    <property type="evidence" value="ECO:0007669"/>
    <property type="project" value="UniProtKB-UniRule"/>
</dbReference>
<dbReference type="GO" id="GO:0003735">
    <property type="term" value="F:structural constituent of ribosome"/>
    <property type="evidence" value="ECO:0007669"/>
    <property type="project" value="InterPro"/>
</dbReference>
<dbReference type="GO" id="GO:0000027">
    <property type="term" value="P:ribosomal large subunit assembly"/>
    <property type="evidence" value="ECO:0007669"/>
    <property type="project" value="UniProtKB-UniRule"/>
</dbReference>
<dbReference type="GO" id="GO:0006412">
    <property type="term" value="P:translation"/>
    <property type="evidence" value="ECO:0007669"/>
    <property type="project" value="InterPro"/>
</dbReference>
<dbReference type="CDD" id="cd07026">
    <property type="entry name" value="Ribosomal_L20"/>
    <property type="match status" value="1"/>
</dbReference>
<dbReference type="FunFam" id="1.10.1900.20:FF:000001">
    <property type="entry name" value="50S ribosomal protein L20"/>
    <property type="match status" value="1"/>
</dbReference>
<dbReference type="Gene3D" id="6.10.160.10">
    <property type="match status" value="1"/>
</dbReference>
<dbReference type="Gene3D" id="1.10.1900.20">
    <property type="entry name" value="Ribosomal protein L20"/>
    <property type="match status" value="1"/>
</dbReference>
<dbReference type="HAMAP" id="MF_00382">
    <property type="entry name" value="Ribosomal_bL20"/>
    <property type="match status" value="1"/>
</dbReference>
<dbReference type="InterPro" id="IPR005813">
    <property type="entry name" value="Ribosomal_bL20"/>
</dbReference>
<dbReference type="InterPro" id="IPR049946">
    <property type="entry name" value="RIBOSOMAL_L20_CS"/>
</dbReference>
<dbReference type="InterPro" id="IPR035566">
    <property type="entry name" value="Ribosomal_protein_bL20_C"/>
</dbReference>
<dbReference type="NCBIfam" id="TIGR01032">
    <property type="entry name" value="rplT_bact"/>
    <property type="match status" value="1"/>
</dbReference>
<dbReference type="PANTHER" id="PTHR10986">
    <property type="entry name" value="39S RIBOSOMAL PROTEIN L20"/>
    <property type="match status" value="1"/>
</dbReference>
<dbReference type="Pfam" id="PF00453">
    <property type="entry name" value="Ribosomal_L20"/>
    <property type="match status" value="1"/>
</dbReference>
<dbReference type="PRINTS" id="PR00062">
    <property type="entry name" value="RIBOSOMALL20"/>
</dbReference>
<dbReference type="SUPFAM" id="SSF74731">
    <property type="entry name" value="Ribosomal protein L20"/>
    <property type="match status" value="1"/>
</dbReference>
<dbReference type="PROSITE" id="PS00937">
    <property type="entry name" value="RIBOSOMAL_L20"/>
    <property type="match status" value="1"/>
</dbReference>
<evidence type="ECO:0000255" key="1">
    <source>
        <dbReference type="HAMAP-Rule" id="MF_00382"/>
    </source>
</evidence>
<evidence type="ECO:0000305" key="2"/>